<reference key="1">
    <citation type="submission" date="1995-10" db="EMBL/GenBank/DDBJ databases">
        <authorList>
            <person name="Delius H."/>
        </authorList>
    </citation>
    <scope>NUCLEOTIDE SEQUENCE [GENOMIC DNA]</scope>
</reference>
<name>VL2_HPV28</name>
<evidence type="ECO:0000255" key="1">
    <source>
        <dbReference type="HAMAP-Rule" id="MF_04003"/>
    </source>
</evidence>
<feature type="chain" id="PRO_0000133595" description="Minor capsid protein L2">
    <location>
        <begin position="1"/>
        <end position="473"/>
    </location>
</feature>
<feature type="short sequence motif" description="Nuclear localization signal" evidence="1">
    <location>
        <begin position="1"/>
        <end position="12"/>
    </location>
</feature>
<feature type="short sequence motif" description="Nuclear localization signal" evidence="1">
    <location>
        <begin position="452"/>
        <end position="462"/>
    </location>
</feature>
<feature type="disulfide bond" evidence="1">
    <location>
        <begin position="21"/>
        <end position="27"/>
    </location>
</feature>
<gene>
    <name evidence="1" type="primary">L2</name>
</gene>
<protein>
    <recommendedName>
        <fullName evidence="1">Minor capsid protein L2</fullName>
    </recommendedName>
</protein>
<organism>
    <name type="scientific">Human papillomavirus 28</name>
    <dbReference type="NCBI Taxonomy" id="37111"/>
    <lineage>
        <taxon>Viruses</taxon>
        <taxon>Monodnaviria</taxon>
        <taxon>Shotokuvirae</taxon>
        <taxon>Cossaviricota</taxon>
        <taxon>Papovaviricetes</taxon>
        <taxon>Zurhausenvirales</taxon>
        <taxon>Papillomaviridae</taxon>
        <taxon>Firstpapillomavirinae</taxon>
        <taxon>Alphapapillomavirus</taxon>
        <taxon>Alphapapillomavirus 2</taxon>
    </lineage>
</organism>
<comment type="function">
    <text evidence="1">Minor protein of the capsid that localizes along the inner surface of the virion, within the central cavities beneath the L1 pentamers. Plays a role in capsid stabilization through interaction with the major capsid protein L1. Once the virion enters the host cell, L2 escorts the genomic DNA into the nucleus by promoting escape from the endosomal compartments and traffic through the host Golgi network. Mechanistically, the C-terminus of L2 possesses a cell-penetrating peptide that protudes from the host endosome, interacts with host cytoplasmic retromer cargo and thereby mediates the capsid delivery to the host trans-Golgi network. Plays a role through its interaction with host dynein in the intracellular microtubule-dependent transport of viral capsid toward the nucleus. Mediates the viral genome import into the nucleus through binding to host importins. Once within the nucleus, L2 localizes viral genomes to host PML bodies in order to activate early gene expression for establishment of infection. Later on, promotes late gene expression by interacting with the viral E2 protein and by inhibiting its transcriptional activation functions. During virion assembly, encapsidates the genome by direct interaction with the viral DNA.</text>
</comment>
<comment type="subunit">
    <text evidence="1">Interacts with major capsid protein L1. Interacts with E2; this interaction inhibits E2 transcriptional activity but not the DNA replication function E2. Interacts with host GADD45GIP1. Interacts with host HSPA8; this interaction is required for L2 nuclear translocation. Interacts with host importins KPNB2 and KPNB3. Forms a complex with importin alpha2-beta1 heterodimers via interaction with the importin alpha2 adapter. Interacts with host DYNLT1; this interaction is essential for virus intracellular transport during entry. Interacts (via C-terminus) with host retromer subunits VPS35 and VPS29.</text>
</comment>
<comment type="subcellular location">
    <subcellularLocation>
        <location evidence="1">Virion</location>
    </subcellularLocation>
    <subcellularLocation>
        <location evidence="1">Host nucleus</location>
    </subcellularLocation>
    <subcellularLocation>
        <location evidence="1">Host early endosome</location>
    </subcellularLocation>
    <subcellularLocation>
        <location evidence="1">Host Golgi apparatus</location>
    </subcellularLocation>
</comment>
<comment type="PTM">
    <text evidence="1">Highly phosphorylated.</text>
</comment>
<comment type="similarity">
    <text evidence="1">Belongs to the papillomaviridae L2 protein family.</text>
</comment>
<accession>P50799</accession>
<keyword id="KW-0167">Capsid protein</keyword>
<keyword id="KW-1176">Cytoplasmic inwards viral transport</keyword>
<keyword id="KW-1015">Disulfide bond</keyword>
<keyword id="KW-0238">DNA-binding</keyword>
<keyword id="KW-1039">Host endosome</keyword>
<keyword id="KW-1040">Host Golgi apparatus</keyword>
<keyword id="KW-1048">Host nucleus</keyword>
<keyword id="KW-0945">Host-virus interaction</keyword>
<keyword id="KW-0426">Late protein</keyword>
<keyword id="KW-1177">Microtubular inwards viral transport</keyword>
<keyword id="KW-0597">Phosphoprotein</keyword>
<keyword id="KW-1163">Viral penetration into host nucleus</keyword>
<keyword id="KW-0946">Virion</keyword>
<keyword id="KW-1160">Virus entry into host cell</keyword>
<sequence length="473" mass="50490">MVAHRARRRKRASATQLYRTCKAAGTCPPDVIPKVEGTTLADRILQWGGLGIYLGGLGIGTGSGTGGRTGYVPLSTRPGTVVDVSVPARPPVVIEPVGPSDPSIVNLLEDSSIINSGSTVPTFSGTGGFEVTSSATTTPAVLDITPATDNVVISSSNFTNPAFTEPSLLEVPQNGEVSGHILVSTPTAGTHSYEEIPMETFASPGTGNEPISSTPVPGVSRIAGPRLYAKAVTQVKVTDPAFLSRPTSLVTFDNPAFEPGDETIIFERPYPPSQVPDPDFMDIIRLHRPALTSRRGTVRFSRLGTKLSMHTRSGKGIGARVHYYQDLSPIGPTEDIEMEPLLAPAENAAGDSIYDVFADVEDADIAFTGRSRSATSSRGYTTVSPLSSTLTTKYGNVTIPFVSPVDVHLHPGPDIITPASTQWPFVPLVPADTTHYVYIDGGDFYLWPVTLFVPRRRRRKRLSYFLADGTVAL</sequence>
<organismHost>
    <name type="scientific">Homo sapiens</name>
    <name type="common">Human</name>
    <dbReference type="NCBI Taxonomy" id="9606"/>
</organismHost>
<dbReference type="EMBL" id="U31783">
    <property type="protein sequence ID" value="AAA79427.1"/>
    <property type="molecule type" value="Genomic_DNA"/>
</dbReference>
<dbReference type="Proteomes" id="UP000009158">
    <property type="component" value="Genome"/>
</dbReference>
<dbReference type="GO" id="GO:0043657">
    <property type="term" value="C:host cell"/>
    <property type="evidence" value="ECO:0007669"/>
    <property type="project" value="GOC"/>
</dbReference>
<dbReference type="GO" id="GO:0044174">
    <property type="term" value="C:host cell endosome"/>
    <property type="evidence" value="ECO:0007669"/>
    <property type="project" value="UniProtKB-KW"/>
</dbReference>
<dbReference type="GO" id="GO:0044177">
    <property type="term" value="C:host cell Golgi apparatus"/>
    <property type="evidence" value="ECO:0007669"/>
    <property type="project" value="UniProtKB-SubCell"/>
</dbReference>
<dbReference type="GO" id="GO:0042025">
    <property type="term" value="C:host cell nucleus"/>
    <property type="evidence" value="ECO:0007669"/>
    <property type="project" value="UniProtKB-SubCell"/>
</dbReference>
<dbReference type="GO" id="GO:0019028">
    <property type="term" value="C:viral capsid"/>
    <property type="evidence" value="ECO:0007669"/>
    <property type="project" value="UniProtKB-UniRule"/>
</dbReference>
<dbReference type="GO" id="GO:0003677">
    <property type="term" value="F:DNA binding"/>
    <property type="evidence" value="ECO:0007669"/>
    <property type="project" value="UniProtKB-UniRule"/>
</dbReference>
<dbReference type="GO" id="GO:0005198">
    <property type="term" value="F:structural molecule activity"/>
    <property type="evidence" value="ECO:0007669"/>
    <property type="project" value="UniProtKB-UniRule"/>
</dbReference>
<dbReference type="GO" id="GO:0075521">
    <property type="term" value="P:microtubule-dependent intracellular transport of viral material towards nucleus"/>
    <property type="evidence" value="ECO:0007669"/>
    <property type="project" value="UniProtKB-UniRule"/>
</dbReference>
<dbReference type="GO" id="GO:0046718">
    <property type="term" value="P:symbiont entry into host cell"/>
    <property type="evidence" value="ECO:0007669"/>
    <property type="project" value="UniProtKB-KW"/>
</dbReference>
<dbReference type="GO" id="GO:0075732">
    <property type="term" value="P:viral penetration into host nucleus"/>
    <property type="evidence" value="ECO:0007669"/>
    <property type="project" value="UniProtKB-KW"/>
</dbReference>
<dbReference type="HAMAP" id="MF_04003">
    <property type="entry name" value="PPV_L2"/>
    <property type="match status" value="1"/>
</dbReference>
<dbReference type="InterPro" id="IPR000784">
    <property type="entry name" value="Late_L2"/>
</dbReference>
<dbReference type="Pfam" id="PF00513">
    <property type="entry name" value="Late_protein_L2"/>
    <property type="match status" value="1"/>
</dbReference>
<proteinExistence type="inferred from homology"/>